<keyword id="KW-0963">Cytoplasm</keyword>
<keyword id="KW-0413">Isomerase</keyword>
<keyword id="KW-0627">Porphyrin biosynthesis</keyword>
<keyword id="KW-0663">Pyridoxal phosphate</keyword>
<reference key="1">
    <citation type="submission" date="2007-03" db="EMBL/GenBank/DDBJ databases">
        <authorList>
            <person name="Heidelberg J."/>
        </authorList>
    </citation>
    <scope>NUCLEOTIDE SEQUENCE [LARGE SCALE GENOMIC DNA]</scope>
    <source>
        <strain>ATCC 39541 / Classical Ogawa 395 / O395</strain>
    </source>
</reference>
<reference key="2">
    <citation type="journal article" date="2008" name="PLoS ONE">
        <title>A recalibrated molecular clock and independent origins for the cholera pandemic clones.</title>
        <authorList>
            <person name="Feng L."/>
            <person name="Reeves P.R."/>
            <person name="Lan R."/>
            <person name="Ren Y."/>
            <person name="Gao C."/>
            <person name="Zhou Z."/>
            <person name="Ren Y."/>
            <person name="Cheng J."/>
            <person name="Wang W."/>
            <person name="Wang J."/>
            <person name="Qian W."/>
            <person name="Li D."/>
            <person name="Wang L."/>
        </authorList>
    </citation>
    <scope>NUCLEOTIDE SEQUENCE [LARGE SCALE GENOMIC DNA]</scope>
    <source>
        <strain>ATCC 39541 / Classical Ogawa 395 / O395</strain>
    </source>
</reference>
<evidence type="ECO:0000255" key="1">
    <source>
        <dbReference type="HAMAP-Rule" id="MF_00375"/>
    </source>
</evidence>
<gene>
    <name evidence="1" type="primary">hemL</name>
    <name type="ordered locus">VC0395_A0154</name>
    <name type="ordered locus">VC395_0643</name>
</gene>
<feature type="chain" id="PRO_1000072153" description="Glutamate-1-semialdehyde 2,1-aminomutase">
    <location>
        <begin position="1"/>
        <end position="432"/>
    </location>
</feature>
<feature type="modified residue" description="N6-(pyridoxal phosphate)lysine" evidence="1">
    <location>
        <position position="265"/>
    </location>
</feature>
<protein>
    <recommendedName>
        <fullName evidence="1">Glutamate-1-semialdehyde 2,1-aminomutase</fullName>
        <shortName evidence="1">GSA</shortName>
        <ecNumber evidence="1">5.4.3.8</ecNumber>
    </recommendedName>
    <alternativeName>
        <fullName evidence="1">Glutamate-1-semialdehyde aminotransferase</fullName>
        <shortName evidence="1">GSA-AT</shortName>
    </alternativeName>
</protein>
<sequence>MTKSAELYQKAQTTIPGGVNSPVRAFNGVGGSPIFIDRADGALIFDADGKAYIDYVGSWGPMILGHNHAVIREAVIQAAQRGLSFGAPTEMEITMAELVSELVPSMEQLRMVNSGTEATMSAIRLARGYTGRDKIIKFEGCYHGHADSLLVKAGSGALTLGQPSSPGVPADFAKHTLTARFNDLDSVRELFAANQGEIACIIVEPVAGNMNCIPPVEGFHEGLREICDQEGALLIFDEVMTGFRVALGGAQAHYNIKPDLTTLGKVIGGGMPVGAFGGRREVMQYIAPTGPVYQAGTLSGNPIAMAAGYACLNLLREEGNEKRLAAKTKQLADGFKSLADQHGIPLLVHQVGGMFGFFFTEQETVTCYEDVARCDVERFKRFFHLMLQHGVYLAPSAFEASFTSLAHGSKEIEATLEAADRSFAILAAEAKA</sequence>
<dbReference type="EC" id="5.4.3.8" evidence="1"/>
<dbReference type="EMBL" id="CP000627">
    <property type="protein sequence ID" value="ABQ20526.1"/>
    <property type="molecule type" value="Genomic_DNA"/>
</dbReference>
<dbReference type="EMBL" id="CP001235">
    <property type="protein sequence ID" value="ACP08661.1"/>
    <property type="molecule type" value="Genomic_DNA"/>
</dbReference>
<dbReference type="RefSeq" id="WP_000167257.1">
    <property type="nucleotide sequence ID" value="NZ_JAACZH010000006.1"/>
</dbReference>
<dbReference type="SMR" id="A5F945"/>
<dbReference type="GeneID" id="89515223"/>
<dbReference type="KEGG" id="vco:VC0395_A0154"/>
<dbReference type="KEGG" id="vcr:VC395_0643"/>
<dbReference type="PATRIC" id="fig|345073.21.peg.623"/>
<dbReference type="eggNOG" id="COG0001">
    <property type="taxonomic scope" value="Bacteria"/>
</dbReference>
<dbReference type="HOGENOM" id="CLU_016922_1_5_6"/>
<dbReference type="OrthoDB" id="9801052at2"/>
<dbReference type="UniPathway" id="UPA00251">
    <property type="reaction ID" value="UER00317"/>
</dbReference>
<dbReference type="Proteomes" id="UP000000249">
    <property type="component" value="Chromosome 2"/>
</dbReference>
<dbReference type="GO" id="GO:0005737">
    <property type="term" value="C:cytoplasm"/>
    <property type="evidence" value="ECO:0007669"/>
    <property type="project" value="UniProtKB-SubCell"/>
</dbReference>
<dbReference type="GO" id="GO:0042286">
    <property type="term" value="F:glutamate-1-semialdehyde 2,1-aminomutase activity"/>
    <property type="evidence" value="ECO:0007669"/>
    <property type="project" value="UniProtKB-UniRule"/>
</dbReference>
<dbReference type="GO" id="GO:0030170">
    <property type="term" value="F:pyridoxal phosphate binding"/>
    <property type="evidence" value="ECO:0007669"/>
    <property type="project" value="InterPro"/>
</dbReference>
<dbReference type="GO" id="GO:0008483">
    <property type="term" value="F:transaminase activity"/>
    <property type="evidence" value="ECO:0007669"/>
    <property type="project" value="InterPro"/>
</dbReference>
<dbReference type="GO" id="GO:0006782">
    <property type="term" value="P:protoporphyrinogen IX biosynthetic process"/>
    <property type="evidence" value="ECO:0007669"/>
    <property type="project" value="UniProtKB-UniRule"/>
</dbReference>
<dbReference type="CDD" id="cd00610">
    <property type="entry name" value="OAT_like"/>
    <property type="match status" value="1"/>
</dbReference>
<dbReference type="FunFam" id="3.40.640.10:FF:000021">
    <property type="entry name" value="Glutamate-1-semialdehyde 2,1-aminomutase"/>
    <property type="match status" value="1"/>
</dbReference>
<dbReference type="FunFam" id="3.90.1150.10:FF:000012">
    <property type="entry name" value="Glutamate-1-semialdehyde 2,1-aminomutase"/>
    <property type="match status" value="1"/>
</dbReference>
<dbReference type="Gene3D" id="3.90.1150.10">
    <property type="entry name" value="Aspartate Aminotransferase, domain 1"/>
    <property type="match status" value="1"/>
</dbReference>
<dbReference type="Gene3D" id="3.40.640.10">
    <property type="entry name" value="Type I PLP-dependent aspartate aminotransferase-like (Major domain)"/>
    <property type="match status" value="1"/>
</dbReference>
<dbReference type="HAMAP" id="MF_00375">
    <property type="entry name" value="HemL_aminotrans_3"/>
    <property type="match status" value="1"/>
</dbReference>
<dbReference type="InterPro" id="IPR004639">
    <property type="entry name" value="4pyrrol_synth_GluAld_NH2Trfase"/>
</dbReference>
<dbReference type="InterPro" id="IPR005814">
    <property type="entry name" value="Aminotrans_3"/>
</dbReference>
<dbReference type="InterPro" id="IPR049704">
    <property type="entry name" value="Aminotrans_3_PPA_site"/>
</dbReference>
<dbReference type="InterPro" id="IPR015424">
    <property type="entry name" value="PyrdxlP-dep_Trfase"/>
</dbReference>
<dbReference type="InterPro" id="IPR015421">
    <property type="entry name" value="PyrdxlP-dep_Trfase_major"/>
</dbReference>
<dbReference type="InterPro" id="IPR015422">
    <property type="entry name" value="PyrdxlP-dep_Trfase_small"/>
</dbReference>
<dbReference type="NCBIfam" id="TIGR00713">
    <property type="entry name" value="hemL"/>
    <property type="match status" value="1"/>
</dbReference>
<dbReference type="NCBIfam" id="NF000818">
    <property type="entry name" value="PRK00062.1"/>
    <property type="match status" value="1"/>
</dbReference>
<dbReference type="PANTHER" id="PTHR43713">
    <property type="entry name" value="GLUTAMATE-1-SEMIALDEHYDE 2,1-AMINOMUTASE"/>
    <property type="match status" value="1"/>
</dbReference>
<dbReference type="PANTHER" id="PTHR43713:SF3">
    <property type="entry name" value="GLUTAMATE-1-SEMIALDEHYDE 2,1-AMINOMUTASE 1, CHLOROPLASTIC-RELATED"/>
    <property type="match status" value="1"/>
</dbReference>
<dbReference type="Pfam" id="PF00202">
    <property type="entry name" value="Aminotran_3"/>
    <property type="match status" value="1"/>
</dbReference>
<dbReference type="SUPFAM" id="SSF53383">
    <property type="entry name" value="PLP-dependent transferases"/>
    <property type="match status" value="1"/>
</dbReference>
<dbReference type="PROSITE" id="PS00600">
    <property type="entry name" value="AA_TRANSFER_CLASS_3"/>
    <property type="match status" value="1"/>
</dbReference>
<comment type="catalytic activity">
    <reaction evidence="1">
        <text>(S)-4-amino-5-oxopentanoate = 5-aminolevulinate</text>
        <dbReference type="Rhea" id="RHEA:14265"/>
        <dbReference type="ChEBI" id="CHEBI:57501"/>
        <dbReference type="ChEBI" id="CHEBI:356416"/>
        <dbReference type="EC" id="5.4.3.8"/>
    </reaction>
</comment>
<comment type="cofactor">
    <cofactor evidence="1">
        <name>pyridoxal 5'-phosphate</name>
        <dbReference type="ChEBI" id="CHEBI:597326"/>
    </cofactor>
</comment>
<comment type="pathway">
    <text evidence="1">Porphyrin-containing compound metabolism; protoporphyrin-IX biosynthesis; 5-aminolevulinate from L-glutamyl-tRNA(Glu): step 2/2.</text>
</comment>
<comment type="subunit">
    <text evidence="1">Homodimer.</text>
</comment>
<comment type="subcellular location">
    <subcellularLocation>
        <location evidence="1">Cytoplasm</location>
    </subcellularLocation>
</comment>
<comment type="similarity">
    <text evidence="1">Belongs to the class-III pyridoxal-phosphate-dependent aminotransferase family. HemL subfamily.</text>
</comment>
<accession>A5F945</accession>
<accession>C3LXF1</accession>
<proteinExistence type="inferred from homology"/>
<name>GSA_VIBC3</name>
<organism>
    <name type="scientific">Vibrio cholerae serotype O1 (strain ATCC 39541 / Classical Ogawa 395 / O395)</name>
    <dbReference type="NCBI Taxonomy" id="345073"/>
    <lineage>
        <taxon>Bacteria</taxon>
        <taxon>Pseudomonadati</taxon>
        <taxon>Pseudomonadota</taxon>
        <taxon>Gammaproteobacteria</taxon>
        <taxon>Vibrionales</taxon>
        <taxon>Vibrionaceae</taxon>
        <taxon>Vibrio</taxon>
    </lineage>
</organism>